<evidence type="ECO:0000305" key="1"/>
<accession>P01314</accession>
<feature type="peptide" id="PRO_0000015758" description="Insulin B chain">
    <location>
        <begin position="1"/>
        <end position="30"/>
    </location>
</feature>
<feature type="peptide" id="PRO_0000015759" description="Insulin A chain">
    <location>
        <begin position="31"/>
        <end position="51"/>
    </location>
</feature>
<feature type="disulfide bond" description="Interchain (between B and A chains)">
    <location>
        <begin position="7"/>
        <end position="37"/>
    </location>
</feature>
<feature type="disulfide bond" description="Interchain (between B and A chains)">
    <location>
        <begin position="19"/>
        <end position="50"/>
    </location>
</feature>
<feature type="disulfide bond">
    <location>
        <begin position="36"/>
        <end position="41"/>
    </location>
</feature>
<feature type="non-consecutive residues" evidence="1">
    <location>
        <begin position="30"/>
        <end position="31"/>
    </location>
</feature>
<protein>
    <recommendedName>
        <fullName>Insulin</fullName>
    </recommendedName>
    <component>
        <recommendedName>
            <fullName>Insulin B chain</fullName>
        </recommendedName>
    </component>
    <component>
        <recommendedName>
            <fullName>Insulin A chain</fullName>
        </recommendedName>
    </component>
</protein>
<dbReference type="PIR" id="A01582">
    <property type="entry name" value="INWH1S"/>
</dbReference>
<dbReference type="BMRB" id="P01314"/>
<dbReference type="SMR" id="P01314"/>
<dbReference type="GO" id="GO:0005615">
    <property type="term" value="C:extracellular space"/>
    <property type="evidence" value="ECO:0007669"/>
    <property type="project" value="TreeGrafter"/>
</dbReference>
<dbReference type="GO" id="GO:0005179">
    <property type="term" value="F:hormone activity"/>
    <property type="evidence" value="ECO:0007669"/>
    <property type="project" value="UniProtKB-KW"/>
</dbReference>
<dbReference type="GO" id="GO:1901701">
    <property type="term" value="P:cellular response to oxygen-containing compound"/>
    <property type="evidence" value="ECO:0007669"/>
    <property type="project" value="UniProtKB-ARBA"/>
</dbReference>
<dbReference type="GO" id="GO:0042593">
    <property type="term" value="P:glucose homeostasis"/>
    <property type="evidence" value="ECO:0007669"/>
    <property type="project" value="TreeGrafter"/>
</dbReference>
<dbReference type="GO" id="GO:0006006">
    <property type="term" value="P:glucose metabolic process"/>
    <property type="evidence" value="ECO:0007669"/>
    <property type="project" value="UniProtKB-KW"/>
</dbReference>
<dbReference type="GO" id="GO:0050714">
    <property type="term" value="P:positive regulation of protein secretion"/>
    <property type="evidence" value="ECO:0007669"/>
    <property type="project" value="TreeGrafter"/>
</dbReference>
<dbReference type="CDD" id="cd04367">
    <property type="entry name" value="IlGF_insulin_like"/>
    <property type="match status" value="1"/>
</dbReference>
<dbReference type="Gene3D" id="1.10.100.10">
    <property type="entry name" value="Insulin-like"/>
    <property type="match status" value="2"/>
</dbReference>
<dbReference type="InterPro" id="IPR004825">
    <property type="entry name" value="Insulin"/>
</dbReference>
<dbReference type="InterPro" id="IPR016179">
    <property type="entry name" value="Insulin-like"/>
</dbReference>
<dbReference type="InterPro" id="IPR036438">
    <property type="entry name" value="Insulin-like_sf"/>
</dbReference>
<dbReference type="InterPro" id="IPR022353">
    <property type="entry name" value="Insulin_CS"/>
</dbReference>
<dbReference type="InterPro" id="IPR022352">
    <property type="entry name" value="Insulin_family"/>
</dbReference>
<dbReference type="PANTHER" id="PTHR11454:SF9">
    <property type="entry name" value="INSULIN"/>
    <property type="match status" value="1"/>
</dbReference>
<dbReference type="PANTHER" id="PTHR11454">
    <property type="entry name" value="INSULIN/INSULIN GROWTH FACTOR"/>
    <property type="match status" value="1"/>
</dbReference>
<dbReference type="Pfam" id="PF00049">
    <property type="entry name" value="Insulin"/>
    <property type="match status" value="1"/>
</dbReference>
<dbReference type="PRINTS" id="PR00277">
    <property type="entry name" value="INSULIN"/>
</dbReference>
<dbReference type="PRINTS" id="PR00276">
    <property type="entry name" value="INSULINFAMLY"/>
</dbReference>
<dbReference type="SMART" id="SM00078">
    <property type="entry name" value="IlGF"/>
    <property type="match status" value="1"/>
</dbReference>
<dbReference type="SUPFAM" id="SSF56994">
    <property type="entry name" value="Insulin-like"/>
    <property type="match status" value="1"/>
</dbReference>
<dbReference type="PROSITE" id="PS00262">
    <property type="entry name" value="INSULIN"/>
    <property type="match status" value="1"/>
</dbReference>
<proteinExistence type="evidence at protein level"/>
<keyword id="KW-0119">Carbohydrate metabolism</keyword>
<keyword id="KW-0903">Direct protein sequencing</keyword>
<keyword id="KW-1015">Disulfide bond</keyword>
<keyword id="KW-0313">Glucose metabolism</keyword>
<keyword id="KW-0372">Hormone</keyword>
<keyword id="KW-0964">Secreted</keyword>
<name>INS_BALBO</name>
<organism>
    <name type="scientific">Balaenoptera borealis</name>
    <name type="common">Sei whale</name>
    <name type="synonym">Pollack whale</name>
    <dbReference type="NCBI Taxonomy" id="9768"/>
    <lineage>
        <taxon>Eukaryota</taxon>
        <taxon>Metazoa</taxon>
        <taxon>Chordata</taxon>
        <taxon>Craniata</taxon>
        <taxon>Vertebrata</taxon>
        <taxon>Euteleostomi</taxon>
        <taxon>Mammalia</taxon>
        <taxon>Eutheria</taxon>
        <taxon>Laurasiatheria</taxon>
        <taxon>Artiodactyla</taxon>
        <taxon>Whippomorpha</taxon>
        <taxon>Cetacea</taxon>
        <taxon>Mysticeti</taxon>
        <taxon>Balaenopteridae</taxon>
        <taxon>Balaenoptera</taxon>
    </lineage>
</organism>
<sequence>FVNQHLCGSHLVEALYLVCGERGFFYTPKAGIVEQCCASTCSLYQLENYCN</sequence>
<comment type="function">
    <text>Insulin decreases blood glucose concentration. It increases cell permeability to monosaccharides, amino acids and fatty acids. It accelerates glycolysis, the pentose phosphate cycle, and glycogen synthesis in liver.</text>
</comment>
<comment type="subunit">
    <text>Heterodimer of a B chain and an A chain linked by two disulfide bonds.</text>
</comment>
<comment type="subcellular location">
    <subcellularLocation>
        <location>Secreted</location>
    </subcellularLocation>
</comment>
<comment type="similarity">
    <text evidence="1">Belongs to the insulin family.</text>
</comment>
<reference key="1">
    <citation type="journal article" date="1958" name="Nature">
        <title>Structure of sperm- and sei-whale insulins and their breakdown by whale pepsin.</title>
        <authorList>
            <person name="Ishihara Y."/>
            <person name="Saito T."/>
            <person name="Ito Y."/>
            <person name="Fujino M."/>
        </authorList>
    </citation>
    <scope>PROTEIN SEQUENCE</scope>
</reference>
<gene>
    <name type="primary">INS</name>
</gene>